<accession>Q0ICH5</accession>
<sequence length="202" mass="22957">MSRYRGPRLRITRRLGDLPGLTRKAAKRSYPPGQHGQARRKRSEYAIRLEEKQKLRFNYGVSERQLVRYVKKARAQEGSTGTNLLKLLENRLDNVCFRIGFGPTVPGARQLVNHGHVTVNGRVTDIASYQCKAGDVIAIRERKCSKLLAEANLQFPGLANVPPHLELDKPKLSAKVIGRAEREWVALEINELLVVEYYSRKV</sequence>
<organism>
    <name type="scientific">Synechococcus sp. (strain CC9311)</name>
    <dbReference type="NCBI Taxonomy" id="64471"/>
    <lineage>
        <taxon>Bacteria</taxon>
        <taxon>Bacillati</taxon>
        <taxon>Cyanobacteriota</taxon>
        <taxon>Cyanophyceae</taxon>
        <taxon>Synechococcales</taxon>
        <taxon>Synechococcaceae</taxon>
        <taxon>Synechococcus</taxon>
    </lineage>
</organism>
<comment type="function">
    <text evidence="1">One of the primary rRNA binding proteins, it binds directly to 16S rRNA where it nucleates assembly of the body of the 30S subunit.</text>
</comment>
<comment type="function">
    <text evidence="1">With S5 and S12 plays an important role in translational accuracy.</text>
</comment>
<comment type="subunit">
    <text evidence="1">Part of the 30S ribosomal subunit. Contacts protein S5. The interaction surface between S4 and S5 is involved in control of translational fidelity.</text>
</comment>
<comment type="similarity">
    <text evidence="1">Belongs to the universal ribosomal protein uS4 family.</text>
</comment>
<keyword id="KW-1185">Reference proteome</keyword>
<keyword id="KW-0687">Ribonucleoprotein</keyword>
<keyword id="KW-0689">Ribosomal protein</keyword>
<keyword id="KW-0694">RNA-binding</keyword>
<keyword id="KW-0699">rRNA-binding</keyword>
<reference key="1">
    <citation type="journal article" date="2006" name="Proc. Natl. Acad. Sci. U.S.A.">
        <title>Genome sequence of Synechococcus CC9311: insights into adaptation to a coastal environment.</title>
        <authorList>
            <person name="Palenik B."/>
            <person name="Ren Q."/>
            <person name="Dupont C.L."/>
            <person name="Myers G.S."/>
            <person name="Heidelberg J.F."/>
            <person name="Badger J.H."/>
            <person name="Madupu R."/>
            <person name="Nelson W.C."/>
            <person name="Brinkac L.M."/>
            <person name="Dodson R.J."/>
            <person name="Durkin A.S."/>
            <person name="Daugherty S.C."/>
            <person name="Sullivan S.A."/>
            <person name="Khouri H."/>
            <person name="Mohamoud Y."/>
            <person name="Halpin R."/>
            <person name="Paulsen I.T."/>
        </authorList>
    </citation>
    <scope>NUCLEOTIDE SEQUENCE [LARGE SCALE GENOMIC DNA]</scope>
    <source>
        <strain>CC9311</strain>
    </source>
</reference>
<evidence type="ECO:0000255" key="1">
    <source>
        <dbReference type="HAMAP-Rule" id="MF_01306"/>
    </source>
</evidence>
<evidence type="ECO:0000256" key="2">
    <source>
        <dbReference type="SAM" id="MobiDB-lite"/>
    </source>
</evidence>
<evidence type="ECO:0000305" key="3"/>
<gene>
    <name evidence="1" type="primary">rpsD</name>
    <name evidence="1" type="synonym">rps4</name>
    <name type="ordered locus">sync_0629</name>
</gene>
<protein>
    <recommendedName>
        <fullName evidence="1">Small ribosomal subunit protein uS4</fullName>
    </recommendedName>
    <alternativeName>
        <fullName evidence="3">30S ribosomal protein S4</fullName>
    </alternativeName>
</protein>
<feature type="chain" id="PRO_0000293384" description="Small ribosomal subunit protein uS4">
    <location>
        <begin position="1"/>
        <end position="202"/>
    </location>
</feature>
<feature type="domain" description="S4 RNA-binding" evidence="1">
    <location>
        <begin position="90"/>
        <end position="152"/>
    </location>
</feature>
<feature type="region of interest" description="Disordered" evidence="2">
    <location>
        <begin position="15"/>
        <end position="42"/>
    </location>
</feature>
<name>RS4_SYNS3</name>
<proteinExistence type="inferred from homology"/>
<dbReference type="EMBL" id="CP000435">
    <property type="protein sequence ID" value="ABI45098.1"/>
    <property type="molecule type" value="Genomic_DNA"/>
</dbReference>
<dbReference type="RefSeq" id="WP_011618574.1">
    <property type="nucleotide sequence ID" value="NC_008319.1"/>
</dbReference>
<dbReference type="SMR" id="Q0ICH5"/>
<dbReference type="STRING" id="64471.sync_0629"/>
<dbReference type="KEGG" id="syg:sync_0629"/>
<dbReference type="eggNOG" id="COG0522">
    <property type="taxonomic scope" value="Bacteria"/>
</dbReference>
<dbReference type="HOGENOM" id="CLU_092403_0_5_3"/>
<dbReference type="OrthoDB" id="9803672at2"/>
<dbReference type="Proteomes" id="UP000001961">
    <property type="component" value="Chromosome"/>
</dbReference>
<dbReference type="GO" id="GO:0015935">
    <property type="term" value="C:small ribosomal subunit"/>
    <property type="evidence" value="ECO:0007669"/>
    <property type="project" value="InterPro"/>
</dbReference>
<dbReference type="GO" id="GO:0019843">
    <property type="term" value="F:rRNA binding"/>
    <property type="evidence" value="ECO:0007669"/>
    <property type="project" value="UniProtKB-UniRule"/>
</dbReference>
<dbReference type="GO" id="GO:0003735">
    <property type="term" value="F:structural constituent of ribosome"/>
    <property type="evidence" value="ECO:0007669"/>
    <property type="project" value="InterPro"/>
</dbReference>
<dbReference type="GO" id="GO:0042274">
    <property type="term" value="P:ribosomal small subunit biogenesis"/>
    <property type="evidence" value="ECO:0007669"/>
    <property type="project" value="TreeGrafter"/>
</dbReference>
<dbReference type="GO" id="GO:0006412">
    <property type="term" value="P:translation"/>
    <property type="evidence" value="ECO:0007669"/>
    <property type="project" value="UniProtKB-UniRule"/>
</dbReference>
<dbReference type="CDD" id="cd00165">
    <property type="entry name" value="S4"/>
    <property type="match status" value="1"/>
</dbReference>
<dbReference type="FunFam" id="3.10.290.10:FF:000001">
    <property type="entry name" value="30S ribosomal protein S4"/>
    <property type="match status" value="1"/>
</dbReference>
<dbReference type="FunFam" id="1.10.1050.10:FF:000002">
    <property type="entry name" value="30S ribosomal protein S4, chloroplastic"/>
    <property type="match status" value="1"/>
</dbReference>
<dbReference type="Gene3D" id="1.10.1050.10">
    <property type="entry name" value="Ribosomal Protein S4 Delta 41, Chain A, domain 1"/>
    <property type="match status" value="1"/>
</dbReference>
<dbReference type="Gene3D" id="3.10.290.10">
    <property type="entry name" value="RNA-binding S4 domain"/>
    <property type="match status" value="1"/>
</dbReference>
<dbReference type="HAMAP" id="MF_01306_B">
    <property type="entry name" value="Ribosomal_uS4_B"/>
    <property type="match status" value="1"/>
</dbReference>
<dbReference type="InterPro" id="IPR022801">
    <property type="entry name" value="Ribosomal_uS4"/>
</dbReference>
<dbReference type="InterPro" id="IPR005709">
    <property type="entry name" value="Ribosomal_uS4_bac-type"/>
</dbReference>
<dbReference type="InterPro" id="IPR018079">
    <property type="entry name" value="Ribosomal_uS4_CS"/>
</dbReference>
<dbReference type="InterPro" id="IPR001912">
    <property type="entry name" value="Ribosomal_uS4_N"/>
</dbReference>
<dbReference type="InterPro" id="IPR002942">
    <property type="entry name" value="S4_RNA-bd"/>
</dbReference>
<dbReference type="InterPro" id="IPR036986">
    <property type="entry name" value="S4_RNA-bd_sf"/>
</dbReference>
<dbReference type="NCBIfam" id="NF003717">
    <property type="entry name" value="PRK05327.1"/>
    <property type="match status" value="1"/>
</dbReference>
<dbReference type="NCBIfam" id="TIGR01017">
    <property type="entry name" value="rpsD_bact"/>
    <property type="match status" value="1"/>
</dbReference>
<dbReference type="PANTHER" id="PTHR11831">
    <property type="entry name" value="30S 40S RIBOSOMAL PROTEIN"/>
    <property type="match status" value="1"/>
</dbReference>
<dbReference type="PANTHER" id="PTHR11831:SF4">
    <property type="entry name" value="SMALL RIBOSOMAL SUBUNIT PROTEIN US4M"/>
    <property type="match status" value="1"/>
</dbReference>
<dbReference type="Pfam" id="PF00163">
    <property type="entry name" value="Ribosomal_S4"/>
    <property type="match status" value="1"/>
</dbReference>
<dbReference type="Pfam" id="PF01479">
    <property type="entry name" value="S4"/>
    <property type="match status" value="1"/>
</dbReference>
<dbReference type="SMART" id="SM01390">
    <property type="entry name" value="Ribosomal_S4"/>
    <property type="match status" value="1"/>
</dbReference>
<dbReference type="SMART" id="SM00363">
    <property type="entry name" value="S4"/>
    <property type="match status" value="1"/>
</dbReference>
<dbReference type="SUPFAM" id="SSF55174">
    <property type="entry name" value="Alpha-L RNA-binding motif"/>
    <property type="match status" value="1"/>
</dbReference>
<dbReference type="PROSITE" id="PS00632">
    <property type="entry name" value="RIBOSOMAL_S4"/>
    <property type="match status" value="1"/>
</dbReference>
<dbReference type="PROSITE" id="PS50889">
    <property type="entry name" value="S4"/>
    <property type="match status" value="1"/>
</dbReference>